<reference key="1">
    <citation type="submission" date="2006-11" db="EMBL/GenBank/DDBJ databases">
        <title>Sequence of Campylobacter fetus subsp. fetus 82-40.</title>
        <authorList>
            <person name="Fouts D.E."/>
            <person name="Nelson K.E."/>
        </authorList>
    </citation>
    <scope>NUCLEOTIDE SEQUENCE [LARGE SCALE GENOMIC DNA]</scope>
    <source>
        <strain>82-40</strain>
    </source>
</reference>
<dbReference type="EMBL" id="CP000487">
    <property type="protein sequence ID" value="ABK81965.1"/>
    <property type="molecule type" value="Genomic_DNA"/>
</dbReference>
<dbReference type="RefSeq" id="WP_002848230.1">
    <property type="nucleotide sequence ID" value="NC_008599.1"/>
</dbReference>
<dbReference type="SMR" id="A0RMH3"/>
<dbReference type="GeneID" id="61064046"/>
<dbReference type="KEGG" id="cff:CFF8240_0201"/>
<dbReference type="eggNOG" id="COG0468">
    <property type="taxonomic scope" value="Bacteria"/>
</dbReference>
<dbReference type="HOGENOM" id="CLU_040469_1_2_7"/>
<dbReference type="Proteomes" id="UP000000760">
    <property type="component" value="Chromosome"/>
</dbReference>
<dbReference type="GO" id="GO:0005829">
    <property type="term" value="C:cytosol"/>
    <property type="evidence" value="ECO:0007669"/>
    <property type="project" value="TreeGrafter"/>
</dbReference>
<dbReference type="GO" id="GO:0005524">
    <property type="term" value="F:ATP binding"/>
    <property type="evidence" value="ECO:0007669"/>
    <property type="project" value="UniProtKB-UniRule"/>
</dbReference>
<dbReference type="GO" id="GO:0016887">
    <property type="term" value="F:ATP hydrolysis activity"/>
    <property type="evidence" value="ECO:0007669"/>
    <property type="project" value="InterPro"/>
</dbReference>
<dbReference type="GO" id="GO:0140664">
    <property type="term" value="F:ATP-dependent DNA damage sensor activity"/>
    <property type="evidence" value="ECO:0007669"/>
    <property type="project" value="InterPro"/>
</dbReference>
<dbReference type="GO" id="GO:0003684">
    <property type="term" value="F:damaged DNA binding"/>
    <property type="evidence" value="ECO:0007669"/>
    <property type="project" value="UniProtKB-UniRule"/>
</dbReference>
<dbReference type="GO" id="GO:0003697">
    <property type="term" value="F:single-stranded DNA binding"/>
    <property type="evidence" value="ECO:0007669"/>
    <property type="project" value="UniProtKB-UniRule"/>
</dbReference>
<dbReference type="GO" id="GO:0006310">
    <property type="term" value="P:DNA recombination"/>
    <property type="evidence" value="ECO:0007669"/>
    <property type="project" value="UniProtKB-UniRule"/>
</dbReference>
<dbReference type="GO" id="GO:0006281">
    <property type="term" value="P:DNA repair"/>
    <property type="evidence" value="ECO:0007669"/>
    <property type="project" value="UniProtKB-UniRule"/>
</dbReference>
<dbReference type="GO" id="GO:0009432">
    <property type="term" value="P:SOS response"/>
    <property type="evidence" value="ECO:0007669"/>
    <property type="project" value="UniProtKB-UniRule"/>
</dbReference>
<dbReference type="CDD" id="cd00983">
    <property type="entry name" value="RecA"/>
    <property type="match status" value="1"/>
</dbReference>
<dbReference type="FunFam" id="3.40.50.300:FF:000087">
    <property type="entry name" value="Recombinase RecA"/>
    <property type="match status" value="1"/>
</dbReference>
<dbReference type="Gene3D" id="3.40.50.300">
    <property type="entry name" value="P-loop containing nucleotide triphosphate hydrolases"/>
    <property type="match status" value="1"/>
</dbReference>
<dbReference type="HAMAP" id="MF_00268">
    <property type="entry name" value="RecA"/>
    <property type="match status" value="1"/>
</dbReference>
<dbReference type="InterPro" id="IPR003593">
    <property type="entry name" value="AAA+_ATPase"/>
</dbReference>
<dbReference type="InterPro" id="IPR013765">
    <property type="entry name" value="DNA_recomb/repair_RecA"/>
</dbReference>
<dbReference type="InterPro" id="IPR020584">
    <property type="entry name" value="DNA_recomb/repair_RecA_CS"/>
</dbReference>
<dbReference type="InterPro" id="IPR027417">
    <property type="entry name" value="P-loop_NTPase"/>
</dbReference>
<dbReference type="InterPro" id="IPR049261">
    <property type="entry name" value="RecA-like_C"/>
</dbReference>
<dbReference type="InterPro" id="IPR049428">
    <property type="entry name" value="RecA-like_N"/>
</dbReference>
<dbReference type="InterPro" id="IPR020588">
    <property type="entry name" value="RecA_ATP-bd"/>
</dbReference>
<dbReference type="InterPro" id="IPR023400">
    <property type="entry name" value="RecA_C_sf"/>
</dbReference>
<dbReference type="InterPro" id="IPR020587">
    <property type="entry name" value="RecA_monomer-monomer_interface"/>
</dbReference>
<dbReference type="NCBIfam" id="TIGR02012">
    <property type="entry name" value="tigrfam_recA"/>
    <property type="match status" value="1"/>
</dbReference>
<dbReference type="PANTHER" id="PTHR45900:SF1">
    <property type="entry name" value="MITOCHONDRIAL DNA REPAIR PROTEIN RECA HOMOLOG-RELATED"/>
    <property type="match status" value="1"/>
</dbReference>
<dbReference type="PANTHER" id="PTHR45900">
    <property type="entry name" value="RECA"/>
    <property type="match status" value="1"/>
</dbReference>
<dbReference type="Pfam" id="PF00154">
    <property type="entry name" value="RecA"/>
    <property type="match status" value="1"/>
</dbReference>
<dbReference type="Pfam" id="PF21096">
    <property type="entry name" value="RecA_C"/>
    <property type="match status" value="1"/>
</dbReference>
<dbReference type="PRINTS" id="PR00142">
    <property type="entry name" value="RECA"/>
</dbReference>
<dbReference type="SMART" id="SM00382">
    <property type="entry name" value="AAA"/>
    <property type="match status" value="1"/>
</dbReference>
<dbReference type="SUPFAM" id="SSF52540">
    <property type="entry name" value="P-loop containing nucleoside triphosphate hydrolases"/>
    <property type="match status" value="1"/>
</dbReference>
<dbReference type="SUPFAM" id="SSF54752">
    <property type="entry name" value="RecA protein, C-terminal domain"/>
    <property type="match status" value="1"/>
</dbReference>
<dbReference type="PROSITE" id="PS00321">
    <property type="entry name" value="RECA_1"/>
    <property type="match status" value="1"/>
</dbReference>
<dbReference type="PROSITE" id="PS50162">
    <property type="entry name" value="RECA_2"/>
    <property type="match status" value="1"/>
</dbReference>
<dbReference type="PROSITE" id="PS50163">
    <property type="entry name" value="RECA_3"/>
    <property type="match status" value="1"/>
</dbReference>
<sequence>MDDNKKKSLDLALKQIDKAFGKGTVLRLGDKEIEPIDSISSGSIGLDIALGIGGVPKGRIVEIYGPESSGKTTLTLHLIAESQKVGGVCAFVDAEHALDVKYAKNLGVDTDNLYISQPDFGEQALDIVETLARSGAVDLIVIDSVAALTPKSEIEGDMGDQHVGLQARLMSQALRKLTGVVHKMGTTVVFINQIRMKIGAMGYGTPETTTGGNALKFYASVRLDVRKIATLKQSDEPIGNRVKVKVVKNKVAPPFRQAEFDIMFGEGISKEGEIIDYGVKLDIIDKSGAWFSYDNSKLGQGRENSKAFLKENKAIADEITEKIRANMGDSIMSGAVDEEEMEGDE</sequence>
<accession>A0RMH3</accession>
<feature type="chain" id="PRO_1000047895" description="Protein RecA">
    <location>
        <begin position="1"/>
        <end position="345"/>
    </location>
</feature>
<feature type="binding site" evidence="1">
    <location>
        <begin position="65"/>
        <end position="72"/>
    </location>
    <ligand>
        <name>ATP</name>
        <dbReference type="ChEBI" id="CHEBI:30616"/>
    </ligand>
</feature>
<gene>
    <name evidence="1" type="primary">recA</name>
    <name type="ordered locus">CFF8240_0201</name>
</gene>
<protein>
    <recommendedName>
        <fullName evidence="1">Protein RecA</fullName>
    </recommendedName>
    <alternativeName>
        <fullName evidence="1">Recombinase A</fullName>
    </alternativeName>
</protein>
<keyword id="KW-0067">ATP-binding</keyword>
<keyword id="KW-0963">Cytoplasm</keyword>
<keyword id="KW-0227">DNA damage</keyword>
<keyword id="KW-0233">DNA recombination</keyword>
<keyword id="KW-0234">DNA repair</keyword>
<keyword id="KW-0238">DNA-binding</keyword>
<keyword id="KW-0547">Nucleotide-binding</keyword>
<keyword id="KW-0742">SOS response</keyword>
<name>RECA_CAMFF</name>
<organism>
    <name type="scientific">Campylobacter fetus subsp. fetus (strain 82-40)</name>
    <dbReference type="NCBI Taxonomy" id="360106"/>
    <lineage>
        <taxon>Bacteria</taxon>
        <taxon>Pseudomonadati</taxon>
        <taxon>Campylobacterota</taxon>
        <taxon>Epsilonproteobacteria</taxon>
        <taxon>Campylobacterales</taxon>
        <taxon>Campylobacteraceae</taxon>
        <taxon>Campylobacter</taxon>
    </lineage>
</organism>
<comment type="function">
    <text evidence="1">Can catalyze the hydrolysis of ATP in the presence of single-stranded DNA, the ATP-dependent uptake of single-stranded DNA by duplex DNA, and the ATP-dependent hybridization of homologous single-stranded DNAs. It interacts with LexA causing its activation and leading to its autocatalytic cleavage.</text>
</comment>
<comment type="subcellular location">
    <subcellularLocation>
        <location evidence="1">Cytoplasm</location>
    </subcellularLocation>
</comment>
<comment type="similarity">
    <text evidence="1">Belongs to the RecA family.</text>
</comment>
<proteinExistence type="inferred from homology"/>
<evidence type="ECO:0000255" key="1">
    <source>
        <dbReference type="HAMAP-Rule" id="MF_00268"/>
    </source>
</evidence>